<organism>
    <name type="scientific">Vitis sp.</name>
    <name type="common">Grape</name>
    <dbReference type="NCBI Taxonomy" id="3604"/>
    <lineage>
        <taxon>Eukaryota</taxon>
        <taxon>Viridiplantae</taxon>
        <taxon>Streptophyta</taxon>
        <taxon>Embryophyta</taxon>
        <taxon>Tracheophyta</taxon>
        <taxon>Spermatophyta</taxon>
        <taxon>Magnoliopsida</taxon>
        <taxon>eudicotyledons</taxon>
        <taxon>Gunneridae</taxon>
        <taxon>Pentapetalae</taxon>
        <taxon>rosids</taxon>
        <taxon>Vitales</taxon>
        <taxon>Vitaceae</taxon>
        <taxon>Viteae</taxon>
        <taxon>Vitis</taxon>
    </lineage>
</organism>
<reference key="1">
    <citation type="submission" date="2007-03" db="UniProtKB">
        <authorList>
            <person name="Girault T."/>
            <person name="Francois J."/>
            <person name="Rogniaux H."/>
            <person name="Delrot S."/>
            <person name="Lemoine R."/>
            <person name="Coutos-Thevenot P."/>
            <person name="Gomes E."/>
        </authorList>
    </citation>
    <scope>PROTEIN SEQUENCE</scope>
    <scope>SUBCELLULAR LOCATION</scope>
    <scope>MASS SPECTROMETRY</scope>
    <source>
        <strain>V.berlandieri X V.vinifera cv. 41B</strain>
    </source>
</reference>
<reference key="2">
    <citation type="journal article" date="1993" name="Eur. J. Biochem.">
        <title>Four 9-kDa proteins excreted by somatic embryos of grapevine are isoforms of lipid-transfer proteins.</title>
        <authorList>
            <person name="Coutos-Thevenot P."/>
            <person name="Jouenne T."/>
            <person name="Maes O."/>
            <person name="Guerbette F."/>
            <person name="Grosbois M."/>
            <person name="Le Caer J.-P."/>
            <person name="Boulay M."/>
            <person name="Deloire A."/>
            <person name="Kader J.-C."/>
            <person name="Guern J."/>
        </authorList>
    </citation>
    <scope>PROTEIN SEQUENCE OF 1-37</scope>
    <source>
        <strain>V.vinifera X Berlanchen cv. Rootstock 41B</strain>
    </source>
</reference>
<feature type="chain" id="PRO_0000153886" description="Non-specific lipid-transfer protein P3">
    <location>
        <begin position="1"/>
        <end position="91"/>
    </location>
</feature>
<feature type="disulfide bond" evidence="1">
    <location>
        <begin position="3"/>
        <end position="50"/>
    </location>
</feature>
<feature type="disulfide bond" evidence="1">
    <location>
        <begin position="13"/>
        <end position="27"/>
    </location>
</feature>
<feature type="disulfide bond" evidence="1">
    <location>
        <begin position="28"/>
        <end position="73"/>
    </location>
</feature>
<feature type="disulfide bond" evidence="1">
    <location>
        <begin position="48"/>
        <end position="87"/>
    </location>
</feature>
<feature type="sequence conflict" description="In Ref. 2; AA sequence." evidence="3" ref="2">
    <original>N</original>
    <variation>I</variation>
    <location>
        <position position="33"/>
    </location>
</feature>
<feature type="sequence conflict" description="In Ref. 2; AA sequence." evidence="3" ref="2">
    <original>N</original>
    <variation>L</variation>
    <location>
        <position position="36"/>
    </location>
</feature>
<comment type="function">
    <text>Plant non-specific lipid-transfer proteins transfer phospholipids as well as galactolipids across membranes. May play a role in wax or cutin deposition in the cell walls of expanding epidermal cells and certain secretory tissues.</text>
</comment>
<comment type="subcellular location">
    <subcellularLocation>
        <location evidence="2">Secreted</location>
    </subcellularLocation>
</comment>
<comment type="mass spectrometry" mass="9274.5" error="1.0" method="Electrospray" evidence="2"/>
<comment type="similarity">
    <text evidence="3">Belongs to the plant LTP family.</text>
</comment>
<sequence length="91" mass="9283">LSCGDVATQMASCINYLRGAGPLPAACCNGVKNLKNSATTTQDRRTACKCLISASKTISGVNFGLAAGLPAKCGVSIPYKISPSTNCDQVN</sequence>
<evidence type="ECO:0000250" key="1"/>
<evidence type="ECO:0000269" key="2">
    <source ref="1"/>
</evidence>
<evidence type="ECO:0000305" key="3"/>
<name>NLTP3_VITSX</name>
<keyword id="KW-0903">Direct protein sequencing</keyword>
<keyword id="KW-1015">Disulfide bond</keyword>
<keyword id="KW-0446">Lipid-binding</keyword>
<keyword id="KW-0964">Secreted</keyword>
<keyword id="KW-0813">Transport</keyword>
<proteinExistence type="evidence at protein level"/>
<protein>
    <recommendedName>
        <fullName>Non-specific lipid-transfer protein P3</fullName>
        <shortName>LTP P3</shortName>
    </recommendedName>
</protein>
<accession>P80273</accession>
<accession>P85104</accession>
<dbReference type="PIR" id="S39036">
    <property type="entry name" value="S39036"/>
</dbReference>
<dbReference type="SMR" id="P80273"/>
<dbReference type="GO" id="GO:0005576">
    <property type="term" value="C:extracellular region"/>
    <property type="evidence" value="ECO:0007669"/>
    <property type="project" value="UniProtKB-SubCell"/>
</dbReference>
<dbReference type="GO" id="GO:0008289">
    <property type="term" value="F:lipid binding"/>
    <property type="evidence" value="ECO:0007669"/>
    <property type="project" value="UniProtKB-KW"/>
</dbReference>
<dbReference type="GO" id="GO:0006869">
    <property type="term" value="P:lipid transport"/>
    <property type="evidence" value="ECO:0007669"/>
    <property type="project" value="InterPro"/>
</dbReference>
<dbReference type="CDD" id="cd01960">
    <property type="entry name" value="nsLTP1"/>
    <property type="match status" value="1"/>
</dbReference>
<dbReference type="FunFam" id="1.10.110.10:FF:000002">
    <property type="entry name" value="Non-specific lipid-transfer protein"/>
    <property type="match status" value="1"/>
</dbReference>
<dbReference type="Gene3D" id="1.10.110.10">
    <property type="entry name" value="Plant lipid-transfer and hydrophobic proteins"/>
    <property type="match status" value="1"/>
</dbReference>
<dbReference type="InterPro" id="IPR036312">
    <property type="entry name" value="Bifun_inhib/LTP/seed_sf"/>
</dbReference>
<dbReference type="InterPro" id="IPR016140">
    <property type="entry name" value="Bifunc_inhib/LTP/seed_store"/>
</dbReference>
<dbReference type="InterPro" id="IPR000528">
    <property type="entry name" value="Plant_nsLTP"/>
</dbReference>
<dbReference type="PANTHER" id="PTHR33076">
    <property type="entry name" value="NON-SPECIFIC LIPID-TRANSFER PROTEIN 2-RELATED"/>
    <property type="match status" value="1"/>
</dbReference>
<dbReference type="Pfam" id="PF00234">
    <property type="entry name" value="Tryp_alpha_amyl"/>
    <property type="match status" value="1"/>
</dbReference>
<dbReference type="PRINTS" id="PR00382">
    <property type="entry name" value="LIPIDTRNSFER"/>
</dbReference>
<dbReference type="SMART" id="SM00499">
    <property type="entry name" value="AAI"/>
    <property type="match status" value="1"/>
</dbReference>
<dbReference type="SUPFAM" id="SSF47699">
    <property type="entry name" value="Bifunctional inhibitor/lipid-transfer protein/seed storage 2S albumin"/>
    <property type="match status" value="1"/>
</dbReference>
<dbReference type="PROSITE" id="PS00597">
    <property type="entry name" value="PLANT_LTP"/>
    <property type="match status" value="1"/>
</dbReference>